<reference key="1">
    <citation type="journal article" date="2006" name="J. Bacteriol.">
        <title>Comparison of the genome sequence of the poultry pathogen Bordetella avium with those of B. bronchiseptica, B. pertussis, and B. parapertussis reveals extensive diversity in surface structures associated with host interaction.</title>
        <authorList>
            <person name="Sebaihia M."/>
            <person name="Preston A."/>
            <person name="Maskell D.J."/>
            <person name="Kuzmiak H."/>
            <person name="Connell T.D."/>
            <person name="King N.D."/>
            <person name="Orndorff P.E."/>
            <person name="Miyamoto D.M."/>
            <person name="Thomson N.R."/>
            <person name="Harris D."/>
            <person name="Goble A."/>
            <person name="Lord A."/>
            <person name="Murphy L."/>
            <person name="Quail M.A."/>
            <person name="Rutter S."/>
            <person name="Squares R."/>
            <person name="Squares S."/>
            <person name="Woodward J."/>
            <person name="Parkhill J."/>
            <person name="Temple L.M."/>
        </authorList>
    </citation>
    <scope>NUCLEOTIDE SEQUENCE [LARGE SCALE GENOMIC DNA]</scope>
    <source>
        <strain>197N</strain>
    </source>
</reference>
<comment type="function">
    <text evidence="1">Binds to the 23S rRNA.</text>
</comment>
<comment type="subunit">
    <text evidence="1">Part of the 50S ribosomal subunit.</text>
</comment>
<comment type="similarity">
    <text evidence="1">Belongs to the universal ribosomal protein uL15 family.</text>
</comment>
<dbReference type="EMBL" id="AM167904">
    <property type="protein sequence ID" value="CAJ47637.1"/>
    <property type="molecule type" value="Genomic_DNA"/>
</dbReference>
<dbReference type="RefSeq" id="WP_012415759.1">
    <property type="nucleotide sequence ID" value="NC_010645.1"/>
</dbReference>
<dbReference type="SMR" id="Q2L260"/>
<dbReference type="STRING" id="360910.BAV0053"/>
<dbReference type="GeneID" id="92936702"/>
<dbReference type="KEGG" id="bav:BAV0053"/>
<dbReference type="eggNOG" id="COG0200">
    <property type="taxonomic scope" value="Bacteria"/>
</dbReference>
<dbReference type="HOGENOM" id="CLU_055188_4_2_4"/>
<dbReference type="OrthoDB" id="9810293at2"/>
<dbReference type="Proteomes" id="UP000001977">
    <property type="component" value="Chromosome"/>
</dbReference>
<dbReference type="GO" id="GO:0022625">
    <property type="term" value="C:cytosolic large ribosomal subunit"/>
    <property type="evidence" value="ECO:0007669"/>
    <property type="project" value="TreeGrafter"/>
</dbReference>
<dbReference type="GO" id="GO:0019843">
    <property type="term" value="F:rRNA binding"/>
    <property type="evidence" value="ECO:0007669"/>
    <property type="project" value="UniProtKB-UniRule"/>
</dbReference>
<dbReference type="GO" id="GO:0003735">
    <property type="term" value="F:structural constituent of ribosome"/>
    <property type="evidence" value="ECO:0007669"/>
    <property type="project" value="InterPro"/>
</dbReference>
<dbReference type="GO" id="GO:0006412">
    <property type="term" value="P:translation"/>
    <property type="evidence" value="ECO:0007669"/>
    <property type="project" value="UniProtKB-UniRule"/>
</dbReference>
<dbReference type="Gene3D" id="3.100.10.10">
    <property type="match status" value="1"/>
</dbReference>
<dbReference type="HAMAP" id="MF_01341">
    <property type="entry name" value="Ribosomal_uL15"/>
    <property type="match status" value="1"/>
</dbReference>
<dbReference type="InterPro" id="IPR030878">
    <property type="entry name" value="Ribosomal_uL15"/>
</dbReference>
<dbReference type="InterPro" id="IPR021131">
    <property type="entry name" value="Ribosomal_uL15/eL18"/>
</dbReference>
<dbReference type="InterPro" id="IPR036227">
    <property type="entry name" value="Ribosomal_uL15/eL18_sf"/>
</dbReference>
<dbReference type="InterPro" id="IPR005749">
    <property type="entry name" value="Ribosomal_uL15_bac-type"/>
</dbReference>
<dbReference type="NCBIfam" id="TIGR01071">
    <property type="entry name" value="rplO_bact"/>
    <property type="match status" value="1"/>
</dbReference>
<dbReference type="PANTHER" id="PTHR12934">
    <property type="entry name" value="50S RIBOSOMAL PROTEIN L15"/>
    <property type="match status" value="1"/>
</dbReference>
<dbReference type="PANTHER" id="PTHR12934:SF11">
    <property type="entry name" value="LARGE RIBOSOMAL SUBUNIT PROTEIN UL15M"/>
    <property type="match status" value="1"/>
</dbReference>
<dbReference type="Pfam" id="PF00828">
    <property type="entry name" value="Ribosomal_L27A"/>
    <property type="match status" value="1"/>
</dbReference>
<dbReference type="SUPFAM" id="SSF52080">
    <property type="entry name" value="Ribosomal proteins L15p and L18e"/>
    <property type="match status" value="1"/>
</dbReference>
<proteinExistence type="inferred from homology"/>
<feature type="chain" id="PRO_0000251491" description="Large ribosomal subunit protein uL15">
    <location>
        <begin position="1"/>
        <end position="146"/>
    </location>
</feature>
<feature type="region of interest" description="Disordered" evidence="2">
    <location>
        <begin position="1"/>
        <end position="65"/>
    </location>
</feature>
<feature type="compositionally biased region" description="Gly residues" evidence="2">
    <location>
        <begin position="24"/>
        <end position="34"/>
    </location>
</feature>
<sequence length="146" mass="15319">MSDIQLNSLKPAEGAKHAKRRVGRGIGSGLGKTAGRGHKGQKSRSGGFHKVGFEGGQMPLQRRLPKRGFTPLGQHLYAEVRLSDLQRLDVEEIDVQALKAAGVVGQGVRYAKVIKSGELSRKVVLRGITATAGARAAVEAAGGSLA</sequence>
<accession>Q2L260</accession>
<evidence type="ECO:0000255" key="1">
    <source>
        <dbReference type="HAMAP-Rule" id="MF_01341"/>
    </source>
</evidence>
<evidence type="ECO:0000256" key="2">
    <source>
        <dbReference type="SAM" id="MobiDB-lite"/>
    </source>
</evidence>
<evidence type="ECO:0000305" key="3"/>
<keyword id="KW-1185">Reference proteome</keyword>
<keyword id="KW-0687">Ribonucleoprotein</keyword>
<keyword id="KW-0689">Ribosomal protein</keyword>
<keyword id="KW-0694">RNA-binding</keyword>
<keyword id="KW-0699">rRNA-binding</keyword>
<name>RL15_BORA1</name>
<organism>
    <name type="scientific">Bordetella avium (strain 197N)</name>
    <dbReference type="NCBI Taxonomy" id="360910"/>
    <lineage>
        <taxon>Bacteria</taxon>
        <taxon>Pseudomonadati</taxon>
        <taxon>Pseudomonadota</taxon>
        <taxon>Betaproteobacteria</taxon>
        <taxon>Burkholderiales</taxon>
        <taxon>Alcaligenaceae</taxon>
        <taxon>Bordetella</taxon>
    </lineage>
</organism>
<protein>
    <recommendedName>
        <fullName evidence="1">Large ribosomal subunit protein uL15</fullName>
    </recommendedName>
    <alternativeName>
        <fullName evidence="3">50S ribosomal protein L15</fullName>
    </alternativeName>
</protein>
<gene>
    <name evidence="1" type="primary">rplO</name>
    <name type="ordered locus">BAV0053</name>
</gene>